<accession>Q83NU2</accession>
<feature type="chain" id="PRO_0000096132" description="Single-stranded DNA-binding protein 1">
    <location>
        <begin position="1"/>
        <end position="186"/>
    </location>
</feature>
<feature type="domain" description="SSB" evidence="1">
    <location>
        <begin position="1"/>
        <end position="108"/>
    </location>
</feature>
<feature type="region of interest" description="Disordered" evidence="2">
    <location>
        <begin position="120"/>
        <end position="186"/>
    </location>
</feature>
<feature type="compositionally biased region" description="Polar residues" evidence="2">
    <location>
        <begin position="132"/>
        <end position="141"/>
    </location>
</feature>
<feature type="compositionally biased region" description="Acidic residues" evidence="2">
    <location>
        <begin position="175"/>
        <end position="186"/>
    </location>
</feature>
<name>SSB1_TROW8</name>
<evidence type="ECO:0000255" key="1">
    <source>
        <dbReference type="HAMAP-Rule" id="MF_00984"/>
    </source>
</evidence>
<evidence type="ECO:0000256" key="2">
    <source>
        <dbReference type="SAM" id="MobiDB-lite"/>
    </source>
</evidence>
<gene>
    <name type="primary">ssb1</name>
    <name type="ordered locus">TW116</name>
</gene>
<comment type="subunit">
    <text evidence="1">Homotetramer.</text>
</comment>
<keyword id="KW-0238">DNA-binding</keyword>
<protein>
    <recommendedName>
        <fullName evidence="1">Single-stranded DNA-binding protein 1</fullName>
        <shortName evidence="1">SSB 1</shortName>
    </recommendedName>
</protein>
<reference key="1">
    <citation type="journal article" date="2003" name="Lancet">
        <title>Sequencing and analysis of the genome of the Whipple's disease bacterium Tropheryma whipplei.</title>
        <authorList>
            <person name="Bentley S.D."/>
            <person name="Maiwald M."/>
            <person name="Murphy L.D."/>
            <person name="Pallen M.J."/>
            <person name="Yeats C.A."/>
            <person name="Dover L.G."/>
            <person name="Norbertczak H.T."/>
            <person name="Besra G.S."/>
            <person name="Quail M.A."/>
            <person name="Harris D.E."/>
            <person name="von Herbay A."/>
            <person name="Goble A."/>
            <person name="Rutter S."/>
            <person name="Squares R."/>
            <person name="Squares S."/>
            <person name="Barrell B.G."/>
            <person name="Parkhill J."/>
            <person name="Relman D.A."/>
        </authorList>
    </citation>
    <scope>NUCLEOTIDE SEQUENCE [LARGE SCALE GENOMIC DNA]</scope>
    <source>
        <strain>TW08/27</strain>
    </source>
</reference>
<organism>
    <name type="scientific">Tropheryma whipplei (strain TW08/27)</name>
    <name type="common">Whipple's bacillus</name>
    <dbReference type="NCBI Taxonomy" id="218496"/>
    <lineage>
        <taxon>Bacteria</taxon>
        <taxon>Bacillati</taxon>
        <taxon>Actinomycetota</taxon>
        <taxon>Actinomycetes</taxon>
        <taxon>Micrococcales</taxon>
        <taxon>Tropherymataceae</taxon>
        <taxon>Tropheryma</taxon>
    </lineage>
</organism>
<sequence>MDATVTVVGNLTADPELRYTATGAAVVNMTIASTPRMYDRQSGEWKDGEPLFLRGILWREYAINAAASLAKGMRVVAVGKLKQRNYETREGDRRTSVELEIDEIGPTLRYATAKCSRATQAGHGVSPDPWADSQTGQGIDSHTTRSEEITENAKNGEGAGKNELNKKVLVGDNVSYEDFDSDEVPF</sequence>
<dbReference type="EMBL" id="BX251410">
    <property type="protein sequence ID" value="CAD66799.1"/>
    <property type="molecule type" value="Genomic_DNA"/>
</dbReference>
<dbReference type="RefSeq" id="WP_011096080.1">
    <property type="nucleotide sequence ID" value="NC_004551.1"/>
</dbReference>
<dbReference type="SMR" id="Q83NU2"/>
<dbReference type="GeneID" id="67387890"/>
<dbReference type="KEGG" id="tws:TW116"/>
<dbReference type="HOGENOM" id="CLU_078758_1_0_11"/>
<dbReference type="GO" id="GO:0003697">
    <property type="term" value="F:single-stranded DNA binding"/>
    <property type="evidence" value="ECO:0007669"/>
    <property type="project" value="UniProtKB-UniRule"/>
</dbReference>
<dbReference type="GO" id="GO:0006260">
    <property type="term" value="P:DNA replication"/>
    <property type="evidence" value="ECO:0007669"/>
    <property type="project" value="InterPro"/>
</dbReference>
<dbReference type="CDD" id="cd04496">
    <property type="entry name" value="SSB_OBF"/>
    <property type="match status" value="1"/>
</dbReference>
<dbReference type="Gene3D" id="2.40.50.140">
    <property type="entry name" value="Nucleic acid-binding proteins"/>
    <property type="match status" value="1"/>
</dbReference>
<dbReference type="HAMAP" id="MF_00984">
    <property type="entry name" value="SSB"/>
    <property type="match status" value="1"/>
</dbReference>
<dbReference type="InterPro" id="IPR012340">
    <property type="entry name" value="NA-bd_OB-fold"/>
</dbReference>
<dbReference type="InterPro" id="IPR000424">
    <property type="entry name" value="Primosome_PriB/ssb"/>
</dbReference>
<dbReference type="InterPro" id="IPR011344">
    <property type="entry name" value="ssDNA-bd"/>
</dbReference>
<dbReference type="NCBIfam" id="NF005851">
    <property type="entry name" value="PRK07772.1"/>
    <property type="match status" value="1"/>
</dbReference>
<dbReference type="NCBIfam" id="TIGR00621">
    <property type="entry name" value="ssb"/>
    <property type="match status" value="1"/>
</dbReference>
<dbReference type="Pfam" id="PF00436">
    <property type="entry name" value="SSB"/>
    <property type="match status" value="1"/>
</dbReference>
<dbReference type="PIRSF" id="PIRSF002070">
    <property type="entry name" value="SSB"/>
    <property type="match status" value="1"/>
</dbReference>
<dbReference type="SUPFAM" id="SSF50249">
    <property type="entry name" value="Nucleic acid-binding proteins"/>
    <property type="match status" value="1"/>
</dbReference>
<dbReference type="PROSITE" id="PS50935">
    <property type="entry name" value="SSB"/>
    <property type="match status" value="1"/>
</dbReference>
<proteinExistence type="inferred from homology"/>